<organism>
    <name type="scientific">Rhizobium etli (strain ATCC 51251 / DSM 11541 / JCM 21823 / NBRC 15573 / CFN 42)</name>
    <dbReference type="NCBI Taxonomy" id="347834"/>
    <lineage>
        <taxon>Bacteria</taxon>
        <taxon>Pseudomonadati</taxon>
        <taxon>Pseudomonadota</taxon>
        <taxon>Alphaproteobacteria</taxon>
        <taxon>Hyphomicrobiales</taxon>
        <taxon>Rhizobiaceae</taxon>
        <taxon>Rhizobium/Agrobacterium group</taxon>
        <taxon>Rhizobium</taxon>
    </lineage>
</organism>
<protein>
    <recommendedName>
        <fullName evidence="1">ATP-dependent protease subunit HslV</fullName>
        <ecNumber evidence="1">3.4.25.2</ecNumber>
    </recommendedName>
</protein>
<evidence type="ECO:0000255" key="1">
    <source>
        <dbReference type="HAMAP-Rule" id="MF_00248"/>
    </source>
</evidence>
<comment type="function">
    <text evidence="1">Protease subunit of a proteasome-like degradation complex believed to be a general protein degrading machinery.</text>
</comment>
<comment type="catalytic activity">
    <reaction evidence="1">
        <text>ATP-dependent cleavage of peptide bonds with broad specificity.</text>
        <dbReference type="EC" id="3.4.25.2"/>
    </reaction>
</comment>
<comment type="activity regulation">
    <text evidence="1">Allosterically activated by HslU binding.</text>
</comment>
<comment type="subunit">
    <text evidence="1">A double ring-shaped homohexamer of HslV is capped on each side by a ring-shaped HslU homohexamer. The assembly of the HslU/HslV complex is dependent on binding of ATP.</text>
</comment>
<comment type="subcellular location">
    <subcellularLocation>
        <location evidence="1">Cytoplasm</location>
    </subcellularLocation>
</comment>
<comment type="similarity">
    <text evidence="1">Belongs to the peptidase T1B family. HslV subfamily.</text>
</comment>
<keyword id="KW-0021">Allosteric enzyme</keyword>
<keyword id="KW-0963">Cytoplasm</keyword>
<keyword id="KW-0378">Hydrolase</keyword>
<keyword id="KW-0479">Metal-binding</keyword>
<keyword id="KW-0645">Protease</keyword>
<keyword id="KW-1185">Reference proteome</keyword>
<keyword id="KW-0915">Sodium</keyword>
<keyword id="KW-0346">Stress response</keyword>
<keyword id="KW-0888">Threonine protease</keyword>
<feature type="chain" id="PRO_0000336788" description="ATP-dependent protease subunit HslV">
    <location>
        <begin position="1"/>
        <end position="175"/>
    </location>
</feature>
<feature type="active site" evidence="1">
    <location>
        <position position="2"/>
    </location>
</feature>
<feature type="binding site" evidence="1">
    <location>
        <position position="156"/>
    </location>
    <ligand>
        <name>Na(+)</name>
        <dbReference type="ChEBI" id="CHEBI:29101"/>
    </ligand>
</feature>
<feature type="binding site" evidence="1">
    <location>
        <position position="159"/>
    </location>
    <ligand>
        <name>Na(+)</name>
        <dbReference type="ChEBI" id="CHEBI:29101"/>
    </ligand>
</feature>
<feature type="binding site" evidence="1">
    <location>
        <position position="162"/>
    </location>
    <ligand>
        <name>Na(+)</name>
        <dbReference type="ChEBI" id="CHEBI:29101"/>
    </ligand>
</feature>
<gene>
    <name evidence="1" type="primary">hslV</name>
    <name type="ordered locus">RHE_CH00048</name>
</gene>
<reference key="1">
    <citation type="journal article" date="2006" name="Proc. Natl. Acad. Sci. U.S.A.">
        <title>The partitioned Rhizobium etli genome: genetic and metabolic redundancy in seven interacting replicons.</title>
        <authorList>
            <person name="Gonzalez V."/>
            <person name="Santamaria R.I."/>
            <person name="Bustos P."/>
            <person name="Hernandez-Gonzalez I."/>
            <person name="Medrano-Soto A."/>
            <person name="Moreno-Hagelsieb G."/>
            <person name="Janga S.C."/>
            <person name="Ramirez M.A."/>
            <person name="Jimenez-Jacinto V."/>
            <person name="Collado-Vides J."/>
            <person name="Davila G."/>
        </authorList>
    </citation>
    <scope>NUCLEOTIDE SEQUENCE [LARGE SCALE GENOMIC DNA]</scope>
    <source>
        <strain>ATCC 51251 / DSM 11541 / JCM 21823 / NBRC 15573 / CFN 42</strain>
    </source>
</reference>
<proteinExistence type="inferred from homology"/>
<sequence>MTTIITVRKGGKVVMAGDGQVSLGQTVMKGNARKVRRIGKGDVIAGFAGATADAFTLLERLEKKLEQYPGQLMRAAVELAKDWRTDKYLRNLEAMMLVADKSITLAITGNGDVLEPEHGTTAIGSGGNFAFAAARALMDTDKPAEEIARRALDIAADICVYTNHNIVVELLDVES</sequence>
<accession>Q2KE55</accession>
<dbReference type="EC" id="3.4.25.2" evidence="1"/>
<dbReference type="EMBL" id="CP000133">
    <property type="protein sequence ID" value="ABC88881.1"/>
    <property type="molecule type" value="Genomic_DNA"/>
</dbReference>
<dbReference type="RefSeq" id="WP_011423452.1">
    <property type="nucleotide sequence ID" value="NC_007761.1"/>
</dbReference>
<dbReference type="SMR" id="Q2KE55"/>
<dbReference type="MEROPS" id="T01.006"/>
<dbReference type="KEGG" id="ret:RHE_CH00048"/>
<dbReference type="eggNOG" id="COG5405">
    <property type="taxonomic scope" value="Bacteria"/>
</dbReference>
<dbReference type="HOGENOM" id="CLU_093872_1_0_5"/>
<dbReference type="OrthoDB" id="9804884at2"/>
<dbReference type="Proteomes" id="UP000001936">
    <property type="component" value="Chromosome"/>
</dbReference>
<dbReference type="GO" id="GO:0009376">
    <property type="term" value="C:HslUV protease complex"/>
    <property type="evidence" value="ECO:0007669"/>
    <property type="project" value="UniProtKB-UniRule"/>
</dbReference>
<dbReference type="GO" id="GO:0005839">
    <property type="term" value="C:proteasome core complex"/>
    <property type="evidence" value="ECO:0007669"/>
    <property type="project" value="InterPro"/>
</dbReference>
<dbReference type="GO" id="GO:0046872">
    <property type="term" value="F:metal ion binding"/>
    <property type="evidence" value="ECO:0007669"/>
    <property type="project" value="UniProtKB-KW"/>
</dbReference>
<dbReference type="GO" id="GO:0004298">
    <property type="term" value="F:threonine-type endopeptidase activity"/>
    <property type="evidence" value="ECO:0007669"/>
    <property type="project" value="UniProtKB-KW"/>
</dbReference>
<dbReference type="GO" id="GO:0051603">
    <property type="term" value="P:proteolysis involved in protein catabolic process"/>
    <property type="evidence" value="ECO:0007669"/>
    <property type="project" value="InterPro"/>
</dbReference>
<dbReference type="CDD" id="cd01913">
    <property type="entry name" value="protease_HslV"/>
    <property type="match status" value="1"/>
</dbReference>
<dbReference type="FunFam" id="3.60.20.10:FF:000002">
    <property type="entry name" value="ATP-dependent protease subunit HslV"/>
    <property type="match status" value="1"/>
</dbReference>
<dbReference type="Gene3D" id="3.60.20.10">
    <property type="entry name" value="Glutamine Phosphoribosylpyrophosphate, subunit 1, domain 1"/>
    <property type="match status" value="1"/>
</dbReference>
<dbReference type="HAMAP" id="MF_00248">
    <property type="entry name" value="HslV"/>
    <property type="match status" value="1"/>
</dbReference>
<dbReference type="InterPro" id="IPR022281">
    <property type="entry name" value="ATP-dep_Prtase_HsIV_su"/>
</dbReference>
<dbReference type="InterPro" id="IPR029055">
    <property type="entry name" value="Ntn_hydrolases_N"/>
</dbReference>
<dbReference type="InterPro" id="IPR001353">
    <property type="entry name" value="Proteasome_sua/b"/>
</dbReference>
<dbReference type="InterPro" id="IPR023333">
    <property type="entry name" value="Proteasome_suB-type"/>
</dbReference>
<dbReference type="NCBIfam" id="TIGR03692">
    <property type="entry name" value="ATP_dep_HslV"/>
    <property type="match status" value="1"/>
</dbReference>
<dbReference type="NCBIfam" id="NF003964">
    <property type="entry name" value="PRK05456.1"/>
    <property type="match status" value="1"/>
</dbReference>
<dbReference type="PANTHER" id="PTHR32194:SF7">
    <property type="entry name" value="ATP-DEPENDENT PROTEASE SUBUNIT HSLV"/>
    <property type="match status" value="1"/>
</dbReference>
<dbReference type="PANTHER" id="PTHR32194">
    <property type="entry name" value="METALLOPROTEASE TLDD"/>
    <property type="match status" value="1"/>
</dbReference>
<dbReference type="Pfam" id="PF00227">
    <property type="entry name" value="Proteasome"/>
    <property type="match status" value="1"/>
</dbReference>
<dbReference type="PIRSF" id="PIRSF039093">
    <property type="entry name" value="HslV"/>
    <property type="match status" value="1"/>
</dbReference>
<dbReference type="SUPFAM" id="SSF56235">
    <property type="entry name" value="N-terminal nucleophile aminohydrolases (Ntn hydrolases)"/>
    <property type="match status" value="1"/>
</dbReference>
<dbReference type="PROSITE" id="PS51476">
    <property type="entry name" value="PROTEASOME_BETA_2"/>
    <property type="match status" value="1"/>
</dbReference>
<name>HSLV_RHIEC</name>